<reference key="1">
    <citation type="journal article" date="2003" name="Science">
        <title>A genomic view of the human-Bacteroides thetaiotaomicron symbiosis.</title>
        <authorList>
            <person name="Xu J."/>
            <person name="Bjursell M.K."/>
            <person name="Himrod J."/>
            <person name="Deng S."/>
            <person name="Carmichael L.K."/>
            <person name="Chiang H.C."/>
            <person name="Hooper L.V."/>
            <person name="Gordon J.I."/>
        </authorList>
    </citation>
    <scope>NUCLEOTIDE SEQUENCE [LARGE SCALE GENOMIC DNA]</scope>
    <source>
        <strain>ATCC 29148 / DSM 2079 / JCM 5827 / CCUG 10774 / NCTC 10582 / VPI-5482 / E50</strain>
    </source>
</reference>
<name>RL27_BACTN</name>
<keyword id="KW-1185">Reference proteome</keyword>
<keyword id="KW-0687">Ribonucleoprotein</keyword>
<keyword id="KW-0689">Ribosomal protein</keyword>
<accession>Q89ZR3</accession>
<organism>
    <name type="scientific">Bacteroides thetaiotaomicron (strain ATCC 29148 / DSM 2079 / JCM 5827 / CCUG 10774 / NCTC 10582 / VPI-5482 / E50)</name>
    <dbReference type="NCBI Taxonomy" id="226186"/>
    <lineage>
        <taxon>Bacteria</taxon>
        <taxon>Pseudomonadati</taxon>
        <taxon>Bacteroidota</taxon>
        <taxon>Bacteroidia</taxon>
        <taxon>Bacteroidales</taxon>
        <taxon>Bacteroidaceae</taxon>
        <taxon>Bacteroides</taxon>
    </lineage>
</organism>
<evidence type="ECO:0000255" key="1">
    <source>
        <dbReference type="HAMAP-Rule" id="MF_00539"/>
    </source>
</evidence>
<evidence type="ECO:0000305" key="2"/>
<feature type="chain" id="PRO_0000181045" description="Large ribosomal subunit protein bL27">
    <location>
        <begin position="1"/>
        <end position="89"/>
    </location>
</feature>
<gene>
    <name evidence="1" type="primary">rpmA</name>
    <name type="ordered locus">BT_4313</name>
</gene>
<dbReference type="EMBL" id="AE015928">
    <property type="protein sequence ID" value="AAO79418.1"/>
    <property type="molecule type" value="Genomic_DNA"/>
</dbReference>
<dbReference type="RefSeq" id="NP_813224.1">
    <property type="nucleotide sequence ID" value="NC_004663.1"/>
</dbReference>
<dbReference type="RefSeq" id="WP_008759983.1">
    <property type="nucleotide sequence ID" value="NZ_UYXG01000010.1"/>
</dbReference>
<dbReference type="SMR" id="Q89ZR3"/>
<dbReference type="FunCoup" id="Q89ZR3">
    <property type="interactions" value="540"/>
</dbReference>
<dbReference type="STRING" id="226186.BT_4313"/>
<dbReference type="PaxDb" id="226186-BT_4313"/>
<dbReference type="EnsemblBacteria" id="AAO79418">
    <property type="protein sequence ID" value="AAO79418"/>
    <property type="gene ID" value="BT_4313"/>
</dbReference>
<dbReference type="GeneID" id="60925491"/>
<dbReference type="KEGG" id="bth:BT_4313"/>
<dbReference type="PATRIC" id="fig|226186.12.peg.4389"/>
<dbReference type="eggNOG" id="COG0211">
    <property type="taxonomic scope" value="Bacteria"/>
</dbReference>
<dbReference type="HOGENOM" id="CLU_095424_4_0_10"/>
<dbReference type="InParanoid" id="Q89ZR3"/>
<dbReference type="OrthoDB" id="9803474at2"/>
<dbReference type="Proteomes" id="UP000001414">
    <property type="component" value="Chromosome"/>
</dbReference>
<dbReference type="GO" id="GO:0022625">
    <property type="term" value="C:cytosolic large ribosomal subunit"/>
    <property type="evidence" value="ECO:0000318"/>
    <property type="project" value="GO_Central"/>
</dbReference>
<dbReference type="GO" id="GO:0003735">
    <property type="term" value="F:structural constituent of ribosome"/>
    <property type="evidence" value="ECO:0000318"/>
    <property type="project" value="GO_Central"/>
</dbReference>
<dbReference type="GO" id="GO:0006412">
    <property type="term" value="P:translation"/>
    <property type="evidence" value="ECO:0007669"/>
    <property type="project" value="UniProtKB-UniRule"/>
</dbReference>
<dbReference type="FunFam" id="2.40.50.100:FF:000026">
    <property type="entry name" value="50S ribosomal protein L27"/>
    <property type="match status" value="1"/>
</dbReference>
<dbReference type="Gene3D" id="2.40.50.100">
    <property type="match status" value="1"/>
</dbReference>
<dbReference type="HAMAP" id="MF_00539">
    <property type="entry name" value="Ribosomal_bL27"/>
    <property type="match status" value="1"/>
</dbReference>
<dbReference type="InterPro" id="IPR001684">
    <property type="entry name" value="Ribosomal_bL27"/>
</dbReference>
<dbReference type="InterPro" id="IPR018261">
    <property type="entry name" value="Ribosomal_bL27_CS"/>
</dbReference>
<dbReference type="NCBIfam" id="TIGR00062">
    <property type="entry name" value="L27"/>
    <property type="match status" value="1"/>
</dbReference>
<dbReference type="PANTHER" id="PTHR15893:SF0">
    <property type="entry name" value="LARGE RIBOSOMAL SUBUNIT PROTEIN BL27M"/>
    <property type="match status" value="1"/>
</dbReference>
<dbReference type="PANTHER" id="PTHR15893">
    <property type="entry name" value="RIBOSOMAL PROTEIN L27"/>
    <property type="match status" value="1"/>
</dbReference>
<dbReference type="Pfam" id="PF01016">
    <property type="entry name" value="Ribosomal_L27"/>
    <property type="match status" value="1"/>
</dbReference>
<dbReference type="PRINTS" id="PR00063">
    <property type="entry name" value="RIBOSOMALL27"/>
</dbReference>
<dbReference type="SUPFAM" id="SSF110324">
    <property type="entry name" value="Ribosomal L27 protein-like"/>
    <property type="match status" value="1"/>
</dbReference>
<dbReference type="PROSITE" id="PS00831">
    <property type="entry name" value="RIBOSOMAL_L27"/>
    <property type="match status" value="1"/>
</dbReference>
<proteinExistence type="inferred from homology"/>
<comment type="similarity">
    <text evidence="1">Belongs to the bacterial ribosomal protein bL27 family.</text>
</comment>
<sequence length="89" mass="9650">MAHKKGVGSSKNGRESHSKRLGVKIFGGEACKAGNIIIRQRGTEFHPGENIGMGKDHTLFALVDGTVKFKVGREDRRYVSIIPAEATEA</sequence>
<protein>
    <recommendedName>
        <fullName evidence="1">Large ribosomal subunit protein bL27</fullName>
    </recommendedName>
    <alternativeName>
        <fullName evidence="2">50S ribosomal protein L27</fullName>
    </alternativeName>
</protein>